<gene>
    <name type="primary">MED26</name>
    <name type="synonym">CRSP7</name>
</gene>
<dbReference type="EMBL" id="BC142325">
    <property type="protein sequence ID" value="AAI42326.1"/>
    <property type="molecule type" value="mRNA"/>
</dbReference>
<dbReference type="RefSeq" id="NP_001092358.1">
    <property type="nucleotide sequence ID" value="NM_001098888.1"/>
</dbReference>
<dbReference type="SMR" id="A5PK23"/>
<dbReference type="FunCoup" id="A5PK23">
    <property type="interactions" value="1847"/>
</dbReference>
<dbReference type="STRING" id="9913.ENSBTAP00000006986"/>
<dbReference type="PaxDb" id="9913-ENSBTAP00000006986"/>
<dbReference type="GeneID" id="506331"/>
<dbReference type="KEGG" id="bta:506331"/>
<dbReference type="CTD" id="9441"/>
<dbReference type="eggNOG" id="KOG1105">
    <property type="taxonomic scope" value="Eukaryota"/>
</dbReference>
<dbReference type="HOGENOM" id="CLU_478915_0_0_1"/>
<dbReference type="InParanoid" id="A5PK23"/>
<dbReference type="OrthoDB" id="550309at2759"/>
<dbReference type="TreeFam" id="TF328436"/>
<dbReference type="Proteomes" id="UP000009136">
    <property type="component" value="Unplaced"/>
</dbReference>
<dbReference type="GO" id="GO:0070847">
    <property type="term" value="C:core mediator complex"/>
    <property type="evidence" value="ECO:0000318"/>
    <property type="project" value="GO_Central"/>
</dbReference>
<dbReference type="GO" id="GO:0016592">
    <property type="term" value="C:mediator complex"/>
    <property type="evidence" value="ECO:0000250"/>
    <property type="project" value="UniProtKB"/>
</dbReference>
<dbReference type="GO" id="GO:0003712">
    <property type="term" value="F:transcription coregulator activity"/>
    <property type="evidence" value="ECO:0000250"/>
    <property type="project" value="UniProtKB"/>
</dbReference>
<dbReference type="GO" id="GO:0010628">
    <property type="term" value="P:positive regulation of gene expression"/>
    <property type="evidence" value="ECO:0000318"/>
    <property type="project" value="GO_Central"/>
</dbReference>
<dbReference type="GO" id="GO:0006357">
    <property type="term" value="P:regulation of transcription by RNA polymerase II"/>
    <property type="evidence" value="ECO:0000250"/>
    <property type="project" value="UniProtKB"/>
</dbReference>
<dbReference type="CDD" id="cd00183">
    <property type="entry name" value="TFIIS_I"/>
    <property type="match status" value="1"/>
</dbReference>
<dbReference type="FunFam" id="1.20.930.10:FF:000008">
    <property type="entry name" value="mediator of RNA polymerase II transcription subunit 26"/>
    <property type="match status" value="1"/>
</dbReference>
<dbReference type="Gene3D" id="1.20.930.10">
    <property type="entry name" value="Conserved domain common to transcription factors TFIIS, elongin A, CRSP70"/>
    <property type="match status" value="1"/>
</dbReference>
<dbReference type="InterPro" id="IPR042376">
    <property type="entry name" value="MED26"/>
</dbReference>
<dbReference type="InterPro" id="IPR031416">
    <property type="entry name" value="Med26_C"/>
</dbReference>
<dbReference type="InterPro" id="IPR031417">
    <property type="entry name" value="Med26_Mid"/>
</dbReference>
<dbReference type="InterPro" id="IPR003617">
    <property type="entry name" value="TFIIS/CRSP70_N_sub"/>
</dbReference>
<dbReference type="InterPro" id="IPR035441">
    <property type="entry name" value="TFIIS/LEDGF_dom_sf"/>
</dbReference>
<dbReference type="InterPro" id="IPR017923">
    <property type="entry name" value="TFIIS_N"/>
</dbReference>
<dbReference type="PANTHER" id="PTHR15201">
    <property type="entry name" value="CRSP70"/>
    <property type="match status" value="1"/>
</dbReference>
<dbReference type="PANTHER" id="PTHR15201:SF1">
    <property type="entry name" value="MEDIATOR OF RNA POLYMERASE II TRANSCRIPTION SUBUNIT 26"/>
    <property type="match status" value="1"/>
</dbReference>
<dbReference type="Pfam" id="PF08711">
    <property type="entry name" value="Med26"/>
    <property type="match status" value="1"/>
</dbReference>
<dbReference type="Pfam" id="PF15693">
    <property type="entry name" value="Med26_C"/>
    <property type="match status" value="1"/>
</dbReference>
<dbReference type="Pfam" id="PF15694">
    <property type="entry name" value="Med26_M"/>
    <property type="match status" value="1"/>
</dbReference>
<dbReference type="SMART" id="SM00509">
    <property type="entry name" value="TFS2N"/>
    <property type="match status" value="1"/>
</dbReference>
<dbReference type="SUPFAM" id="SSF47676">
    <property type="entry name" value="Conserved domain common to transcription factors TFIIS, elongin A, CRSP70"/>
    <property type="match status" value="1"/>
</dbReference>
<dbReference type="PROSITE" id="PS51319">
    <property type="entry name" value="TFIIS_N"/>
    <property type="match status" value="1"/>
</dbReference>
<accession>A5PK23</accession>
<organism>
    <name type="scientific">Bos taurus</name>
    <name type="common">Bovine</name>
    <dbReference type="NCBI Taxonomy" id="9913"/>
    <lineage>
        <taxon>Eukaryota</taxon>
        <taxon>Metazoa</taxon>
        <taxon>Chordata</taxon>
        <taxon>Craniata</taxon>
        <taxon>Vertebrata</taxon>
        <taxon>Euteleostomi</taxon>
        <taxon>Mammalia</taxon>
        <taxon>Eutheria</taxon>
        <taxon>Laurasiatheria</taxon>
        <taxon>Artiodactyla</taxon>
        <taxon>Ruminantia</taxon>
        <taxon>Pecora</taxon>
        <taxon>Bovidae</taxon>
        <taxon>Bovinae</taxon>
        <taxon>Bos</taxon>
    </lineage>
</organism>
<name>MED26_BOVIN</name>
<sequence length="599" mass="65515">MTAAPPSPQQIRDRLLQAIDPQSNIRNMVAVQEVISSLEKYPITKEALEETRLGKLINDVRKKTKNEELAKRAKKLLRSWQKLIEPVHQNEAALRGLAGAPGSANGGAHNCRPEAGAAGPPKSVHDLKYRNDMPRLCGQRLDRLGSRKRRGDQRDLGHPGPPPKVSKASHDSLVPNSSPLPTNGISGSPESFPSPLDSSGHVGPEGNRLEHGENDKHSGKIPVNAVRPHTSSPGLGKPPGPCLQTKAVVLQQLDKVDETPGPPHPKGPPRCSLGSRNSRHEGSFARQRSPYTYKGSLPSPSPRPQSLDATQVPSPLPLAQPSTPPVRRLELLPSAESPVRWLEQPEGHQRLAGLGCKAGLPPAEPLLPRAGFSPDSSKADSDAASSGGSDSKKKKRYRPRDYTVNLDGQVAEAGVKPVRLKERKLTFDPMTRQIKPLTQKEPVRADSPVHTEQPRTELDKPEAKASLQSPFEQTNWKELSRNEIIQSYLSRQSSLLSSSGAQTPGAHHFMSEYLKQEESTRRGARKPHVLVPHGPPTDFPGLSREVTRDDLDKIQAHQWPGVNGCQDTQGNWYDWTQCISLDPHGDDGRLNILPYVCLD</sequence>
<proteinExistence type="evidence at transcript level"/>
<protein>
    <recommendedName>
        <fullName>Mediator of RNA polymerase II transcription subunit 26</fullName>
    </recommendedName>
    <alternativeName>
        <fullName>Cofactor required for Sp1 transcriptional activation subunit 7</fullName>
        <shortName>CRSP complex subunit 7</shortName>
    </alternativeName>
    <alternativeName>
        <fullName>Mediator complex subunit 26</fullName>
    </alternativeName>
</protein>
<reference key="1">
    <citation type="submission" date="2007-06" db="EMBL/GenBank/DDBJ databases">
        <authorList>
            <consortium name="NIH - Mammalian Gene Collection (MGC) project"/>
        </authorList>
    </citation>
    <scope>NUCLEOTIDE SEQUENCE [LARGE SCALE MRNA]</scope>
    <source>
        <strain>Hereford</strain>
        <tissue>Thymus</tissue>
    </source>
</reference>
<evidence type="ECO:0000250" key="1"/>
<evidence type="ECO:0000250" key="2">
    <source>
        <dbReference type="UniProtKB" id="O95402"/>
    </source>
</evidence>
<evidence type="ECO:0000250" key="3">
    <source>
        <dbReference type="UniProtKB" id="Q7TN02"/>
    </source>
</evidence>
<evidence type="ECO:0000255" key="4">
    <source>
        <dbReference type="PROSITE-ProRule" id="PRU00649"/>
    </source>
</evidence>
<evidence type="ECO:0000256" key="5">
    <source>
        <dbReference type="SAM" id="MobiDB-lite"/>
    </source>
</evidence>
<evidence type="ECO:0000305" key="6"/>
<keyword id="KW-0010">Activator</keyword>
<keyword id="KW-0539">Nucleus</keyword>
<keyword id="KW-0597">Phosphoprotein</keyword>
<keyword id="KW-1185">Reference proteome</keyword>
<keyword id="KW-0804">Transcription</keyword>
<keyword id="KW-0805">Transcription regulation</keyword>
<feature type="chain" id="PRO_0000304958" description="Mediator of RNA polymerase II transcription subunit 26">
    <location>
        <begin position="1"/>
        <end position="599"/>
    </location>
</feature>
<feature type="domain" description="TFIIS N-terminal" evidence="4">
    <location>
        <begin position="10"/>
        <end position="87"/>
    </location>
</feature>
<feature type="region of interest" description="Disordered" evidence="5">
    <location>
        <begin position="98"/>
        <end position="331"/>
    </location>
</feature>
<feature type="region of interest" description="Disordered" evidence="5">
    <location>
        <begin position="352"/>
        <end position="403"/>
    </location>
</feature>
<feature type="region of interest" description="Disordered" evidence="5">
    <location>
        <begin position="427"/>
        <end position="470"/>
    </location>
</feature>
<feature type="compositionally biased region" description="Basic and acidic residues" evidence="5">
    <location>
        <begin position="123"/>
        <end position="133"/>
    </location>
</feature>
<feature type="compositionally biased region" description="Polar residues" evidence="5">
    <location>
        <begin position="174"/>
        <end position="191"/>
    </location>
</feature>
<feature type="compositionally biased region" description="Basic and acidic residues" evidence="5">
    <location>
        <begin position="207"/>
        <end position="218"/>
    </location>
</feature>
<feature type="compositionally biased region" description="Pro residues" evidence="5">
    <location>
        <begin position="314"/>
        <end position="324"/>
    </location>
</feature>
<feature type="compositionally biased region" description="Basic and acidic residues" evidence="5">
    <location>
        <begin position="441"/>
        <end position="463"/>
    </location>
</feature>
<feature type="modified residue" description="Phosphoserine" evidence="2">
    <location>
        <position position="447"/>
    </location>
</feature>
<feature type="modified residue" description="Phosphoserine" evidence="2">
    <location>
        <position position="469"/>
    </location>
</feature>
<comment type="function">
    <text evidence="1">Component of the Mediator complex, a coactivator involved in the regulated transcription of nearly all RNA polymerase II-dependent genes. Mediator functions as a bridge to convey information from gene-specific regulatory proteins to the basal RNA polymerase II transcription machinery. Mediator is recruited to promoters by direct interactions with regulatory proteins and serves as a scaffold for the assembly of a functional pre-initiation complex with RNA polymerase II and the general transcription factors (By similarity).</text>
</comment>
<comment type="subunit">
    <text evidence="2 3">Component of the Mediator complex, which is composed of MED1, MED4, MED6, MED7, MED8, MED9, MED10, MED11, MED12, MED13, MED13L, MED14, MED15, MED16, MED17, MED18, MED19, MED20, MED21, MED22, MED23, MED24, MED25, MED26, MED27, MED29, MED30, MED31, CCNC, CDK8 and CDC2L6/CDK11. The MED12, MED13, CCNC and CDK8 subunits form a distinct module termed the CDK8 module. Mediator containing the CDK8 module is less active than Mediator lacking this module in supporting transcriptional activation. Individual preparations of the Mediator complex lacking one or more distinct subunits have been variously termed ARC, CRSP, DRIP, PC2, SMCC and TRAP. Interacts with CEBPB (when not methylated) (By similarity).</text>
</comment>
<comment type="subcellular location">
    <subcellularLocation>
        <location evidence="6">Nucleus</location>
    </subcellularLocation>
</comment>
<comment type="similarity">
    <text evidence="6">Belongs to the Mediator complex subunit 26 family.</text>
</comment>